<gene>
    <name evidence="2" type="primary">psaC</name>
</gene>
<dbReference type="EC" id="1.97.1.12" evidence="2"/>
<dbReference type="EMBL" id="EF137809">
    <property type="protein sequence ID" value="ABL95200.1"/>
    <property type="molecule type" value="Genomic_DNA"/>
</dbReference>
<dbReference type="SMR" id="A1YV27"/>
<dbReference type="GO" id="GO:0009535">
    <property type="term" value="C:chloroplast thylakoid membrane"/>
    <property type="evidence" value="ECO:0007669"/>
    <property type="project" value="UniProtKB-SubCell"/>
</dbReference>
<dbReference type="GO" id="GO:0009522">
    <property type="term" value="C:photosystem I"/>
    <property type="evidence" value="ECO:0007669"/>
    <property type="project" value="UniProtKB-KW"/>
</dbReference>
<dbReference type="GO" id="GO:0051539">
    <property type="term" value="F:4 iron, 4 sulfur cluster binding"/>
    <property type="evidence" value="ECO:0007669"/>
    <property type="project" value="UniProtKB-KW"/>
</dbReference>
<dbReference type="GO" id="GO:0009055">
    <property type="term" value="F:electron transfer activity"/>
    <property type="evidence" value="ECO:0007669"/>
    <property type="project" value="UniProtKB-UniRule"/>
</dbReference>
<dbReference type="GO" id="GO:0046872">
    <property type="term" value="F:metal ion binding"/>
    <property type="evidence" value="ECO:0007669"/>
    <property type="project" value="UniProtKB-KW"/>
</dbReference>
<dbReference type="GO" id="GO:0016491">
    <property type="term" value="F:oxidoreductase activity"/>
    <property type="evidence" value="ECO:0007669"/>
    <property type="project" value="UniProtKB-KW"/>
</dbReference>
<dbReference type="GO" id="GO:0009773">
    <property type="term" value="P:photosynthetic electron transport in photosystem I"/>
    <property type="evidence" value="ECO:0007669"/>
    <property type="project" value="InterPro"/>
</dbReference>
<dbReference type="FunFam" id="3.30.70.20:FF:000001">
    <property type="entry name" value="Photosystem I iron-sulfur center"/>
    <property type="match status" value="1"/>
</dbReference>
<dbReference type="Gene3D" id="3.30.70.20">
    <property type="match status" value="1"/>
</dbReference>
<dbReference type="HAMAP" id="MF_01303">
    <property type="entry name" value="PSI_PsaC"/>
    <property type="match status" value="1"/>
</dbReference>
<dbReference type="InterPro" id="IPR017896">
    <property type="entry name" value="4Fe4S_Fe-S-bd"/>
</dbReference>
<dbReference type="InterPro" id="IPR017900">
    <property type="entry name" value="4Fe4S_Fe_S_CS"/>
</dbReference>
<dbReference type="InterPro" id="IPR050157">
    <property type="entry name" value="PSI_iron-sulfur_center"/>
</dbReference>
<dbReference type="InterPro" id="IPR017491">
    <property type="entry name" value="PSI_PsaC"/>
</dbReference>
<dbReference type="NCBIfam" id="TIGR03048">
    <property type="entry name" value="PS_I_psaC"/>
    <property type="match status" value="1"/>
</dbReference>
<dbReference type="PANTHER" id="PTHR24960:SF79">
    <property type="entry name" value="PHOTOSYSTEM I IRON-SULFUR CENTER"/>
    <property type="match status" value="1"/>
</dbReference>
<dbReference type="PANTHER" id="PTHR24960">
    <property type="entry name" value="PHOTOSYSTEM I IRON-SULFUR CENTER-RELATED"/>
    <property type="match status" value="1"/>
</dbReference>
<dbReference type="Pfam" id="PF12838">
    <property type="entry name" value="Fer4_7"/>
    <property type="match status" value="1"/>
</dbReference>
<dbReference type="SUPFAM" id="SSF54862">
    <property type="entry name" value="4Fe-4S ferredoxins"/>
    <property type="match status" value="1"/>
</dbReference>
<dbReference type="PROSITE" id="PS00198">
    <property type="entry name" value="4FE4S_FER_1"/>
    <property type="match status" value="2"/>
</dbReference>
<dbReference type="PROSITE" id="PS51379">
    <property type="entry name" value="4FE4S_FER_2"/>
    <property type="match status" value="2"/>
</dbReference>
<protein>
    <recommendedName>
        <fullName evidence="2">Photosystem I iron-sulfur center</fullName>
        <ecNumber evidence="2">1.97.1.12</ecNumber>
    </recommendedName>
    <alternativeName>
        <fullName evidence="2">9 kDa polypeptide</fullName>
    </alternativeName>
    <alternativeName>
        <fullName evidence="2">PSI-C</fullName>
    </alternativeName>
    <alternativeName>
        <fullName evidence="2">Photosystem I subunit VII</fullName>
    </alternativeName>
    <alternativeName>
        <fullName evidence="2">PsaC</fullName>
    </alternativeName>
</protein>
<proteinExistence type="inferred from homology"/>
<reference key="1">
    <citation type="submission" date="2006-11" db="EMBL/GenBank/DDBJ databases">
        <title>Sequence variation of chloroplast psaC gene region occurred in some Triticeae species.</title>
        <authorList>
            <person name="Ning S."/>
            <person name="Chen Q."/>
            <person name="Yuan Z."/>
            <person name="Zhang L."/>
            <person name="Liu D."/>
        </authorList>
    </citation>
    <scope>NUCLEOTIDE SEQUENCE [GENOMIC DNA]</scope>
</reference>
<keyword id="KW-0004">4Fe-4S</keyword>
<keyword id="KW-0150">Chloroplast</keyword>
<keyword id="KW-0249">Electron transport</keyword>
<keyword id="KW-0408">Iron</keyword>
<keyword id="KW-0411">Iron-sulfur</keyword>
<keyword id="KW-0472">Membrane</keyword>
<keyword id="KW-0479">Metal-binding</keyword>
<keyword id="KW-0560">Oxidoreductase</keyword>
<keyword id="KW-0602">Photosynthesis</keyword>
<keyword id="KW-0603">Photosystem I</keyword>
<keyword id="KW-0934">Plastid</keyword>
<keyword id="KW-0677">Repeat</keyword>
<keyword id="KW-0793">Thylakoid</keyword>
<keyword id="KW-0813">Transport</keyword>
<accession>A1YV27</accession>
<geneLocation type="chloroplast"/>
<feature type="initiator methionine" description="Removed" evidence="1">
    <location>
        <position position="1"/>
    </location>
</feature>
<feature type="chain" id="PRO_0000292129" description="Photosystem I iron-sulfur center">
    <location>
        <begin position="2"/>
        <end position="81"/>
    </location>
</feature>
<feature type="domain" description="4Fe-4S ferredoxin-type 1" evidence="2">
    <location>
        <begin position="2"/>
        <end position="31"/>
    </location>
</feature>
<feature type="domain" description="4Fe-4S ferredoxin-type 2" evidence="2">
    <location>
        <begin position="39"/>
        <end position="68"/>
    </location>
</feature>
<feature type="binding site" evidence="2">
    <location>
        <position position="11"/>
    </location>
    <ligand>
        <name>[4Fe-4S] cluster</name>
        <dbReference type="ChEBI" id="CHEBI:49883"/>
        <label>1</label>
    </ligand>
</feature>
<feature type="binding site" evidence="2">
    <location>
        <position position="14"/>
    </location>
    <ligand>
        <name>[4Fe-4S] cluster</name>
        <dbReference type="ChEBI" id="CHEBI:49883"/>
        <label>1</label>
    </ligand>
</feature>
<feature type="binding site" evidence="2">
    <location>
        <position position="17"/>
    </location>
    <ligand>
        <name>[4Fe-4S] cluster</name>
        <dbReference type="ChEBI" id="CHEBI:49883"/>
        <label>1</label>
    </ligand>
</feature>
<feature type="binding site" evidence="2">
    <location>
        <position position="21"/>
    </location>
    <ligand>
        <name>[4Fe-4S] cluster</name>
        <dbReference type="ChEBI" id="CHEBI:49883"/>
        <label>2</label>
    </ligand>
</feature>
<feature type="binding site" evidence="2">
    <location>
        <position position="48"/>
    </location>
    <ligand>
        <name>[4Fe-4S] cluster</name>
        <dbReference type="ChEBI" id="CHEBI:49883"/>
        <label>2</label>
    </ligand>
</feature>
<feature type="binding site" evidence="2">
    <location>
        <position position="51"/>
    </location>
    <ligand>
        <name>[4Fe-4S] cluster</name>
        <dbReference type="ChEBI" id="CHEBI:49883"/>
        <label>2</label>
    </ligand>
</feature>
<feature type="binding site" evidence="2">
    <location>
        <position position="54"/>
    </location>
    <ligand>
        <name>[4Fe-4S] cluster</name>
        <dbReference type="ChEBI" id="CHEBI:49883"/>
        <label>2</label>
    </ligand>
</feature>
<feature type="binding site" evidence="2">
    <location>
        <position position="58"/>
    </location>
    <ligand>
        <name>[4Fe-4S] cluster</name>
        <dbReference type="ChEBI" id="CHEBI:49883"/>
        <label>1</label>
    </ligand>
</feature>
<evidence type="ECO:0000250" key="1"/>
<evidence type="ECO:0000255" key="2">
    <source>
        <dbReference type="HAMAP-Rule" id="MF_01303"/>
    </source>
</evidence>
<sequence length="81" mass="8899">MSHSVKIYDTCIGCTQCVRACPTDVLEMIPWDGCKAKQIASAPRTEDCVGCKRCESACPTDFLSVRVYLGPETTRSMALSY</sequence>
<comment type="function">
    <text evidence="2">Apoprotein for the two 4Fe-4S centers FA and FB of photosystem I (PSI); essential for photochemical activity. FB is the terminal electron acceptor of PSI, donating electrons to ferredoxin. The C-terminus interacts with PsaA/B/D and helps assemble the protein into the PSI complex. Required for binding of PsaD and PsaE to PSI. PSI is a plastocyanin-ferredoxin oxidoreductase, converting photonic excitation into a charge separation, which transfers an electron from the donor P700 chlorophyll pair to the spectroscopically characterized acceptors A0, A1, FX, FA and FB in turn.</text>
</comment>
<comment type="catalytic activity">
    <reaction evidence="2">
        <text>reduced [plastocyanin] + hnu + oxidized [2Fe-2S]-[ferredoxin] = oxidized [plastocyanin] + reduced [2Fe-2S]-[ferredoxin]</text>
        <dbReference type="Rhea" id="RHEA:30407"/>
        <dbReference type="Rhea" id="RHEA-COMP:10000"/>
        <dbReference type="Rhea" id="RHEA-COMP:10001"/>
        <dbReference type="Rhea" id="RHEA-COMP:10039"/>
        <dbReference type="Rhea" id="RHEA-COMP:10040"/>
        <dbReference type="ChEBI" id="CHEBI:29036"/>
        <dbReference type="ChEBI" id="CHEBI:30212"/>
        <dbReference type="ChEBI" id="CHEBI:33737"/>
        <dbReference type="ChEBI" id="CHEBI:33738"/>
        <dbReference type="ChEBI" id="CHEBI:49552"/>
        <dbReference type="EC" id="1.97.1.12"/>
    </reaction>
</comment>
<comment type="cofactor">
    <cofactor evidence="2">
        <name>[4Fe-4S] cluster</name>
        <dbReference type="ChEBI" id="CHEBI:49883"/>
    </cofactor>
    <text evidence="2">Binds 2 [4Fe-4S] clusters. Cluster 2 is most probably the spectroscopically characterized electron acceptor FA and cluster 1 is most probably FB.</text>
</comment>
<comment type="subunit">
    <text evidence="2">The eukaryotic PSI reaction center is composed of at least 11 subunits.</text>
</comment>
<comment type="subcellular location">
    <subcellularLocation>
        <location evidence="2">Plastid</location>
        <location evidence="2">Chloroplast thylakoid membrane</location>
        <topology evidence="2">Peripheral membrane protein</topology>
        <orientation evidence="2">Stromal side</orientation>
    </subcellularLocation>
</comment>
<name>PSAC_PSEPI</name>
<organism>
    <name type="scientific">Pseudoroegneria spicata</name>
    <name type="common">Bluebunch wheatgrass</name>
    <name type="synonym">Agropyron spicatum</name>
    <dbReference type="NCBI Taxonomy" id="4604"/>
    <lineage>
        <taxon>Eukaryota</taxon>
        <taxon>Viridiplantae</taxon>
        <taxon>Streptophyta</taxon>
        <taxon>Embryophyta</taxon>
        <taxon>Tracheophyta</taxon>
        <taxon>Spermatophyta</taxon>
        <taxon>Magnoliopsida</taxon>
        <taxon>Liliopsida</taxon>
        <taxon>Poales</taxon>
        <taxon>Poaceae</taxon>
        <taxon>BOP clade</taxon>
        <taxon>Pooideae</taxon>
        <taxon>Triticodae</taxon>
        <taxon>Triticeae</taxon>
        <taxon>Hordeinae</taxon>
        <taxon>Pseudoroegneria</taxon>
    </lineage>
</organism>